<dbReference type="EC" id="4.1.1.98" evidence="1"/>
<dbReference type="EMBL" id="CP001277">
    <property type="protein sequence ID" value="ACQ68674.1"/>
    <property type="molecule type" value="Genomic_DNA"/>
</dbReference>
<dbReference type="RefSeq" id="WP_015874419.1">
    <property type="nucleotide sequence ID" value="NC_012751.1"/>
</dbReference>
<dbReference type="SMR" id="C4K7Y1"/>
<dbReference type="STRING" id="572265.HDEF_2109"/>
<dbReference type="GeneID" id="66261647"/>
<dbReference type="KEGG" id="hde:HDEF_2109"/>
<dbReference type="eggNOG" id="COG0043">
    <property type="taxonomic scope" value="Bacteria"/>
</dbReference>
<dbReference type="HOGENOM" id="CLU_023348_4_1_6"/>
<dbReference type="UniPathway" id="UPA00232"/>
<dbReference type="Proteomes" id="UP000002334">
    <property type="component" value="Chromosome"/>
</dbReference>
<dbReference type="GO" id="GO:0005829">
    <property type="term" value="C:cytosol"/>
    <property type="evidence" value="ECO:0007669"/>
    <property type="project" value="TreeGrafter"/>
</dbReference>
<dbReference type="GO" id="GO:0005886">
    <property type="term" value="C:plasma membrane"/>
    <property type="evidence" value="ECO:0007669"/>
    <property type="project" value="UniProtKB-SubCell"/>
</dbReference>
<dbReference type="GO" id="GO:0008694">
    <property type="term" value="F:3-octaprenyl-4-hydroxybenzoate carboxy-lyase activity"/>
    <property type="evidence" value="ECO:0007669"/>
    <property type="project" value="UniProtKB-UniRule"/>
</dbReference>
<dbReference type="GO" id="GO:0046872">
    <property type="term" value="F:metal ion binding"/>
    <property type="evidence" value="ECO:0007669"/>
    <property type="project" value="UniProtKB-KW"/>
</dbReference>
<dbReference type="GO" id="GO:0006744">
    <property type="term" value="P:ubiquinone biosynthetic process"/>
    <property type="evidence" value="ECO:0007669"/>
    <property type="project" value="UniProtKB-UniRule"/>
</dbReference>
<dbReference type="FunFam" id="1.20.5.570:FF:000001">
    <property type="entry name" value="3-octaprenyl-4-hydroxybenzoate carboxy-lyase"/>
    <property type="match status" value="1"/>
</dbReference>
<dbReference type="FunFam" id="3.40.1670.10:FF:000001">
    <property type="entry name" value="3-octaprenyl-4-hydroxybenzoate carboxy-lyase"/>
    <property type="match status" value="1"/>
</dbReference>
<dbReference type="Gene3D" id="1.20.5.570">
    <property type="entry name" value="Single helix bin"/>
    <property type="match status" value="1"/>
</dbReference>
<dbReference type="Gene3D" id="3.40.1670.10">
    <property type="entry name" value="UbiD C-terminal domain-like"/>
    <property type="match status" value="1"/>
</dbReference>
<dbReference type="HAMAP" id="MF_01636">
    <property type="entry name" value="UbiD"/>
    <property type="match status" value="1"/>
</dbReference>
<dbReference type="InterPro" id="IPR002830">
    <property type="entry name" value="UbiD"/>
</dbReference>
<dbReference type="InterPro" id="IPR049381">
    <property type="entry name" value="UbiD-like_C"/>
</dbReference>
<dbReference type="InterPro" id="IPR049383">
    <property type="entry name" value="UbiD-like_N"/>
</dbReference>
<dbReference type="InterPro" id="IPR023677">
    <property type="entry name" value="UbiD_bacteria"/>
</dbReference>
<dbReference type="InterPro" id="IPR048304">
    <property type="entry name" value="UbiD_Rift_dom"/>
</dbReference>
<dbReference type="NCBIfam" id="NF008175">
    <property type="entry name" value="PRK10922.1"/>
    <property type="match status" value="1"/>
</dbReference>
<dbReference type="NCBIfam" id="TIGR00148">
    <property type="entry name" value="UbiD family decarboxylase"/>
    <property type="match status" value="1"/>
</dbReference>
<dbReference type="PANTHER" id="PTHR30108">
    <property type="entry name" value="3-OCTAPRENYL-4-HYDROXYBENZOATE CARBOXY-LYASE-RELATED"/>
    <property type="match status" value="1"/>
</dbReference>
<dbReference type="PANTHER" id="PTHR30108:SF17">
    <property type="entry name" value="FERULIC ACID DECARBOXYLASE 1"/>
    <property type="match status" value="1"/>
</dbReference>
<dbReference type="Pfam" id="PF01977">
    <property type="entry name" value="UbiD"/>
    <property type="match status" value="1"/>
</dbReference>
<dbReference type="Pfam" id="PF20696">
    <property type="entry name" value="UbiD_C"/>
    <property type="match status" value="1"/>
</dbReference>
<dbReference type="Pfam" id="PF20695">
    <property type="entry name" value="UbiD_N"/>
    <property type="match status" value="1"/>
</dbReference>
<dbReference type="SUPFAM" id="SSF50475">
    <property type="entry name" value="FMN-binding split barrel"/>
    <property type="match status" value="1"/>
</dbReference>
<dbReference type="SUPFAM" id="SSF143968">
    <property type="entry name" value="UbiD C-terminal domain-like"/>
    <property type="match status" value="1"/>
</dbReference>
<gene>
    <name evidence="1" type="primary">ubiD</name>
    <name type="ordered locus">HDEF_2109</name>
</gene>
<protein>
    <recommendedName>
        <fullName evidence="1">3-octaprenyl-4-hydroxybenzoate carboxy-lyase</fullName>
        <ecNumber evidence="1">4.1.1.98</ecNumber>
    </recommendedName>
    <alternativeName>
        <fullName evidence="1">Polyprenyl p-hydroxybenzoate decarboxylase</fullName>
    </alternativeName>
</protein>
<proteinExistence type="inferred from homology"/>
<evidence type="ECO:0000255" key="1">
    <source>
        <dbReference type="HAMAP-Rule" id="MF_01636"/>
    </source>
</evidence>
<accession>C4K7Y1</accession>
<feature type="chain" id="PRO_1000215809" description="3-octaprenyl-4-hydroxybenzoate carboxy-lyase">
    <location>
        <begin position="1"/>
        <end position="495"/>
    </location>
</feature>
<feature type="active site" description="Proton donor" evidence="1">
    <location>
        <position position="286"/>
    </location>
</feature>
<feature type="binding site" evidence="1">
    <location>
        <position position="171"/>
    </location>
    <ligand>
        <name>Mn(2+)</name>
        <dbReference type="ChEBI" id="CHEBI:29035"/>
    </ligand>
</feature>
<feature type="binding site" evidence="1">
    <location>
        <begin position="174"/>
        <end position="176"/>
    </location>
    <ligand>
        <name>prenylated FMN</name>
        <dbReference type="ChEBI" id="CHEBI:87746"/>
    </ligand>
</feature>
<feature type="binding site" evidence="1">
    <location>
        <begin position="188"/>
        <end position="190"/>
    </location>
    <ligand>
        <name>prenylated FMN</name>
        <dbReference type="ChEBI" id="CHEBI:87746"/>
    </ligand>
</feature>
<feature type="binding site" evidence="1">
    <location>
        <begin position="193"/>
        <end position="194"/>
    </location>
    <ligand>
        <name>prenylated FMN</name>
        <dbReference type="ChEBI" id="CHEBI:87746"/>
    </ligand>
</feature>
<feature type="binding site" evidence="1">
    <location>
        <position position="237"/>
    </location>
    <ligand>
        <name>Mn(2+)</name>
        <dbReference type="ChEBI" id="CHEBI:29035"/>
    </ligand>
</feature>
<comment type="function">
    <text evidence="1">Catalyzes the decarboxylation of 3-octaprenyl-4-hydroxy benzoate to 2-octaprenylphenol, an intermediate step in ubiquinone biosynthesis.</text>
</comment>
<comment type="catalytic activity">
    <reaction evidence="1">
        <text>a 4-hydroxy-3-(all-trans-polyprenyl)benzoate + H(+) = a 2-(all-trans-polyprenyl)phenol + CO2</text>
        <dbReference type="Rhea" id="RHEA:41680"/>
        <dbReference type="Rhea" id="RHEA-COMP:9514"/>
        <dbReference type="Rhea" id="RHEA-COMP:9516"/>
        <dbReference type="ChEBI" id="CHEBI:1269"/>
        <dbReference type="ChEBI" id="CHEBI:15378"/>
        <dbReference type="ChEBI" id="CHEBI:16526"/>
        <dbReference type="ChEBI" id="CHEBI:78396"/>
        <dbReference type="EC" id="4.1.1.98"/>
    </reaction>
</comment>
<comment type="cofactor">
    <cofactor evidence="1">
        <name>prenylated FMN</name>
        <dbReference type="ChEBI" id="CHEBI:87746"/>
    </cofactor>
    <text evidence="1">Binds 1 prenylated FMN per subunit.</text>
</comment>
<comment type="cofactor">
    <cofactor evidence="1">
        <name>Mn(2+)</name>
        <dbReference type="ChEBI" id="CHEBI:29035"/>
    </cofactor>
</comment>
<comment type="pathway">
    <text evidence="1">Cofactor biosynthesis; ubiquinone biosynthesis.</text>
</comment>
<comment type="subunit">
    <text evidence="1">Homohexamer.</text>
</comment>
<comment type="subcellular location">
    <subcellularLocation>
        <location evidence="1">Cell membrane</location>
        <topology evidence="1">Peripheral membrane protein</topology>
    </subcellularLocation>
</comment>
<comment type="similarity">
    <text evidence="1">Belongs to the UbiD family.</text>
</comment>
<organism>
    <name type="scientific">Hamiltonella defensa subsp. Acyrthosiphon pisum (strain 5AT)</name>
    <dbReference type="NCBI Taxonomy" id="572265"/>
    <lineage>
        <taxon>Bacteria</taxon>
        <taxon>Pseudomonadati</taxon>
        <taxon>Pseudomonadota</taxon>
        <taxon>Gammaproteobacteria</taxon>
        <taxon>Enterobacterales</taxon>
        <taxon>Enterobacteriaceae</taxon>
        <taxon>aphid secondary symbionts</taxon>
        <taxon>Candidatus Hamiltonella</taxon>
    </lineage>
</organism>
<reference key="1">
    <citation type="journal article" date="2009" name="Proc. Natl. Acad. Sci. U.S.A.">
        <title>Hamiltonella defensa, genome evolution of protective bacterial endosymbiont from pathogenic ancestors.</title>
        <authorList>
            <person name="Degnan P.H."/>
            <person name="Yu Y."/>
            <person name="Sisneros N."/>
            <person name="Wing R.A."/>
            <person name="Moran N.A."/>
        </authorList>
    </citation>
    <scope>NUCLEOTIDE SEQUENCE [LARGE SCALE GENOMIC DNA]</scope>
    <source>
        <strain>5AT</strain>
    </source>
</reference>
<sequence>MKYKDLRDFLALLEAKGELKRIHQTIDPFLEMTEISDRTLQAQGPALLFEKPKGHAMPVLCNLFGTTQRVAMGMGQKDISTLRELGQLLAFLKEPEPPKGFRDLLSKLPKFKQILNMPNKILTSAPCQEEIWKDNLDLGCLPAMHCWPGDVAPLITWGLTITRGPHKERQNLGIYRQQVLSKNKIIMRWLPHRGGALDYREWCKTNPGQPFPVAVALGADPATILGAVTPVPDTLSEYAFSGLLRGYRTEVVKCLSSDLQVPANAEIVLEGYIQPGETAEEGPYGDHTGYYNETEHFPVFTVSHITKRQDAIYHSTYTGRPPDEPSILGAALNEVFIPILQKQFPEIVDFYLPPEGCSYRLAVVTIKKQYAGHAKRVMMGVWSFLRQFMYTKFVIVCDDDINARNWNDVIWAITTRMDPARDTLLIENTPIDYLDFASPVAGLGSKMGLDATNKWSAETQRVWGRTIKMDKSVCDRIDAIWDELNIFNQQSVKKK</sequence>
<keyword id="KW-1003">Cell membrane</keyword>
<keyword id="KW-0210">Decarboxylase</keyword>
<keyword id="KW-0285">Flavoprotein</keyword>
<keyword id="KW-0288">FMN</keyword>
<keyword id="KW-0456">Lyase</keyword>
<keyword id="KW-0464">Manganese</keyword>
<keyword id="KW-0472">Membrane</keyword>
<keyword id="KW-0479">Metal-binding</keyword>
<keyword id="KW-0831">Ubiquinone biosynthesis</keyword>
<name>UBID_HAMD5</name>